<keyword id="KW-1003">Cell membrane</keyword>
<keyword id="KW-0472">Membrane</keyword>
<keyword id="KW-1185">Reference proteome</keyword>
<keyword id="KW-0812">Transmembrane</keyword>
<keyword id="KW-1133">Transmembrane helix</keyword>
<feature type="chain" id="PRO_0000283026" description="UPF0421 protein SSP0904">
    <location>
        <begin position="1"/>
        <end position="328"/>
    </location>
</feature>
<feature type="transmembrane region" description="Helical" evidence="1">
    <location>
        <begin position="26"/>
        <end position="46"/>
    </location>
</feature>
<feature type="transmembrane region" description="Helical" evidence="1">
    <location>
        <begin position="61"/>
        <end position="81"/>
    </location>
</feature>
<feature type="transmembrane region" description="Helical" evidence="1">
    <location>
        <begin position="84"/>
        <end position="104"/>
    </location>
</feature>
<feature type="transmembrane region" description="Helical" evidence="1">
    <location>
        <begin position="132"/>
        <end position="152"/>
    </location>
</feature>
<sequence length="328" mass="37319">MNDNWYKKIIGARTIKTGLATFLTALFCLALNLNPIFAILTAIVTIEPTAKASLKKGYRRLPATIIGALFAVIFTFIFGDQSPFAYALSATFTIILCTKLNLHVGTTVATLTAMAMIPGIHEAYFFNFFSRLLTAIIGLVTAGLVNFIILPPKYYDQVESSINLTESKMYELFELRMRQLLLGKFTKGAPYRQLNQLIDLNQKVETLLSYQKDELSYHKHHDSEWIQLKALTTRAHTNRLFITHLSNLVYLPKDTIITFTNDEKLAILSIAQSINNIYSTGHFERKKQHASLLKMSVKGLDEFDSNQLKSHVIYEILLIYRILDHRFA</sequence>
<protein>
    <recommendedName>
        <fullName>UPF0421 protein SSP0904</fullName>
    </recommendedName>
</protein>
<organism>
    <name type="scientific">Staphylococcus saprophyticus subsp. saprophyticus (strain ATCC 15305 / DSM 20229 / NCIMB 8711 / NCTC 7292 / S-41)</name>
    <dbReference type="NCBI Taxonomy" id="342451"/>
    <lineage>
        <taxon>Bacteria</taxon>
        <taxon>Bacillati</taxon>
        <taxon>Bacillota</taxon>
        <taxon>Bacilli</taxon>
        <taxon>Bacillales</taxon>
        <taxon>Staphylococcaceae</taxon>
        <taxon>Staphylococcus</taxon>
    </lineage>
</organism>
<gene>
    <name type="ordered locus">SSP0904</name>
</gene>
<dbReference type="EMBL" id="AP008934">
    <property type="protein sequence ID" value="BAE18049.1"/>
    <property type="molecule type" value="Genomic_DNA"/>
</dbReference>
<dbReference type="RefSeq" id="WP_002482841.1">
    <property type="nucleotide sequence ID" value="NZ_MTGA01000031.1"/>
</dbReference>
<dbReference type="SMR" id="Q49YT4"/>
<dbReference type="KEGG" id="ssp:SSP0904"/>
<dbReference type="eggNOG" id="COG4129">
    <property type="taxonomic scope" value="Bacteria"/>
</dbReference>
<dbReference type="HOGENOM" id="CLU_067028_0_0_9"/>
<dbReference type="OrthoDB" id="2690036at2"/>
<dbReference type="Proteomes" id="UP000006371">
    <property type="component" value="Chromosome"/>
</dbReference>
<dbReference type="GO" id="GO:0005886">
    <property type="term" value="C:plasma membrane"/>
    <property type="evidence" value="ECO:0007669"/>
    <property type="project" value="UniProtKB-SubCell"/>
</dbReference>
<dbReference type="InterPro" id="IPR010343">
    <property type="entry name" value="ArAE_1"/>
</dbReference>
<dbReference type="PANTHER" id="PTHR30509:SF9">
    <property type="entry name" value="MULTIDRUG RESISTANCE PROTEIN MDTO"/>
    <property type="match status" value="1"/>
</dbReference>
<dbReference type="PANTHER" id="PTHR30509">
    <property type="entry name" value="P-HYDROXYBENZOIC ACID EFFLUX PUMP SUBUNIT-RELATED"/>
    <property type="match status" value="1"/>
</dbReference>
<dbReference type="Pfam" id="PF06081">
    <property type="entry name" value="ArAE_1"/>
    <property type="match status" value="1"/>
</dbReference>
<proteinExistence type="inferred from homology"/>
<comment type="subcellular location">
    <subcellularLocation>
        <location evidence="2">Cell membrane</location>
        <topology evidence="2">Multi-pass membrane protein</topology>
    </subcellularLocation>
</comment>
<comment type="similarity">
    <text evidence="2">Belongs to the UPF0421 family.</text>
</comment>
<name>Y904_STAS1</name>
<evidence type="ECO:0000255" key="1"/>
<evidence type="ECO:0000305" key="2"/>
<accession>Q49YT4</accession>
<reference key="1">
    <citation type="journal article" date="2005" name="Proc. Natl. Acad. Sci. U.S.A.">
        <title>Whole genome sequence of Staphylococcus saprophyticus reveals the pathogenesis of uncomplicated urinary tract infection.</title>
        <authorList>
            <person name="Kuroda M."/>
            <person name="Yamashita A."/>
            <person name="Hirakawa H."/>
            <person name="Kumano M."/>
            <person name="Morikawa K."/>
            <person name="Higashide M."/>
            <person name="Maruyama A."/>
            <person name="Inose Y."/>
            <person name="Matoba K."/>
            <person name="Toh H."/>
            <person name="Kuhara S."/>
            <person name="Hattori M."/>
            <person name="Ohta T."/>
        </authorList>
    </citation>
    <scope>NUCLEOTIDE SEQUENCE [LARGE SCALE GENOMIC DNA]</scope>
    <source>
        <strain>ATCC 15305 / DSM 20229 / NCIMB 8711 / NCTC 7292 / S-41</strain>
    </source>
</reference>